<evidence type="ECO:0000255" key="1">
    <source>
        <dbReference type="HAMAP-Rule" id="MF_00360"/>
    </source>
</evidence>
<evidence type="ECO:0000305" key="2"/>
<organism>
    <name type="scientific">Desulfovibrio desulfuricans (strain ATCC 27774 / DSM 6949 / MB)</name>
    <dbReference type="NCBI Taxonomy" id="525146"/>
    <lineage>
        <taxon>Bacteria</taxon>
        <taxon>Pseudomonadati</taxon>
        <taxon>Thermodesulfobacteriota</taxon>
        <taxon>Desulfovibrionia</taxon>
        <taxon>Desulfovibrionales</taxon>
        <taxon>Desulfovibrionaceae</taxon>
        <taxon>Desulfovibrio</taxon>
    </lineage>
</organism>
<gene>
    <name evidence="1" type="primary">rpsF</name>
    <name type="ordered locus">Ddes_2024</name>
</gene>
<dbReference type="EMBL" id="CP001358">
    <property type="protein sequence ID" value="ACL49920.1"/>
    <property type="molecule type" value="Genomic_DNA"/>
</dbReference>
<dbReference type="SMR" id="B8J3B0"/>
<dbReference type="STRING" id="525146.Ddes_2024"/>
<dbReference type="KEGG" id="dds:Ddes_2024"/>
<dbReference type="eggNOG" id="COG0360">
    <property type="taxonomic scope" value="Bacteria"/>
</dbReference>
<dbReference type="HOGENOM" id="CLU_113441_5_1_7"/>
<dbReference type="GO" id="GO:0022627">
    <property type="term" value="C:cytosolic small ribosomal subunit"/>
    <property type="evidence" value="ECO:0007669"/>
    <property type="project" value="TreeGrafter"/>
</dbReference>
<dbReference type="GO" id="GO:0070181">
    <property type="term" value="F:small ribosomal subunit rRNA binding"/>
    <property type="evidence" value="ECO:0007669"/>
    <property type="project" value="TreeGrafter"/>
</dbReference>
<dbReference type="GO" id="GO:0003735">
    <property type="term" value="F:structural constituent of ribosome"/>
    <property type="evidence" value="ECO:0007669"/>
    <property type="project" value="InterPro"/>
</dbReference>
<dbReference type="GO" id="GO:0006412">
    <property type="term" value="P:translation"/>
    <property type="evidence" value="ECO:0007669"/>
    <property type="project" value="UniProtKB-UniRule"/>
</dbReference>
<dbReference type="CDD" id="cd00473">
    <property type="entry name" value="bS6"/>
    <property type="match status" value="1"/>
</dbReference>
<dbReference type="Gene3D" id="3.30.70.60">
    <property type="match status" value="1"/>
</dbReference>
<dbReference type="HAMAP" id="MF_00360">
    <property type="entry name" value="Ribosomal_bS6"/>
    <property type="match status" value="1"/>
</dbReference>
<dbReference type="InterPro" id="IPR000529">
    <property type="entry name" value="Ribosomal_bS6"/>
</dbReference>
<dbReference type="InterPro" id="IPR035980">
    <property type="entry name" value="Ribosomal_bS6_sf"/>
</dbReference>
<dbReference type="InterPro" id="IPR020814">
    <property type="entry name" value="Ribosomal_S6_plastid/chlpt"/>
</dbReference>
<dbReference type="InterPro" id="IPR014717">
    <property type="entry name" value="Transl_elong_EF1B/ribsomal_bS6"/>
</dbReference>
<dbReference type="NCBIfam" id="TIGR00166">
    <property type="entry name" value="S6"/>
    <property type="match status" value="1"/>
</dbReference>
<dbReference type="PANTHER" id="PTHR21011">
    <property type="entry name" value="MITOCHONDRIAL 28S RIBOSOMAL PROTEIN S6"/>
    <property type="match status" value="1"/>
</dbReference>
<dbReference type="PANTHER" id="PTHR21011:SF1">
    <property type="entry name" value="SMALL RIBOSOMAL SUBUNIT PROTEIN BS6M"/>
    <property type="match status" value="1"/>
</dbReference>
<dbReference type="Pfam" id="PF01250">
    <property type="entry name" value="Ribosomal_S6"/>
    <property type="match status" value="1"/>
</dbReference>
<dbReference type="SUPFAM" id="SSF54995">
    <property type="entry name" value="Ribosomal protein S6"/>
    <property type="match status" value="1"/>
</dbReference>
<name>RS6_DESDA</name>
<keyword id="KW-0687">Ribonucleoprotein</keyword>
<keyword id="KW-0689">Ribosomal protein</keyword>
<keyword id="KW-0694">RNA-binding</keyword>
<keyword id="KW-0699">rRNA-binding</keyword>
<proteinExistence type="inferred from homology"/>
<feature type="chain" id="PRO_1000133524" description="Small ribosomal subunit protein bS6">
    <location>
        <begin position="1"/>
        <end position="102"/>
    </location>
</feature>
<sequence>MRKFETLLLLSPELSAENREGVVSTFTGIIEREKGVMEEVDNWGMRDLAYPVRKLMRGYYVRLVYQGPAPLVAELERNIRMTDGVFKFVTVKLADEVAGEVA</sequence>
<reference key="1">
    <citation type="submission" date="2009-01" db="EMBL/GenBank/DDBJ databases">
        <title>Complete sequence of Desulfovibrio desulfuricans subsp. desulfuricans str. ATCC 27774.</title>
        <authorList>
            <consortium name="US DOE Joint Genome Institute"/>
            <person name="Lucas S."/>
            <person name="Copeland A."/>
            <person name="Lapidus A."/>
            <person name="Glavina del Rio T."/>
            <person name="Tice H."/>
            <person name="Bruce D."/>
            <person name="Goodwin L."/>
            <person name="Pitluck S."/>
            <person name="Sims D."/>
            <person name="Lu M."/>
            <person name="Kiss H."/>
            <person name="Meineke L."/>
            <person name="Brettin T."/>
            <person name="Detter J.C."/>
            <person name="Han C."/>
            <person name="Larimer F."/>
            <person name="Land M."/>
            <person name="Hauser L."/>
            <person name="Kyrpides N."/>
            <person name="Ovchinnikova G."/>
            <person name="Hazen T.C."/>
        </authorList>
    </citation>
    <scope>NUCLEOTIDE SEQUENCE [LARGE SCALE GENOMIC DNA]</scope>
    <source>
        <strain>ATCC 27774 / DSM 6949 / MB</strain>
    </source>
</reference>
<comment type="function">
    <text evidence="1">Binds together with bS18 to 16S ribosomal RNA.</text>
</comment>
<comment type="similarity">
    <text evidence="1">Belongs to the bacterial ribosomal protein bS6 family.</text>
</comment>
<protein>
    <recommendedName>
        <fullName evidence="1">Small ribosomal subunit protein bS6</fullName>
    </recommendedName>
    <alternativeName>
        <fullName evidence="2">30S ribosomal protein S6</fullName>
    </alternativeName>
</protein>
<accession>B8J3B0</accession>